<dbReference type="EMBL" id="BA000033">
    <property type="protein sequence ID" value="BAB96171.1"/>
    <property type="molecule type" value="Genomic_DNA"/>
</dbReference>
<dbReference type="RefSeq" id="WP_000289213.1">
    <property type="nucleotide sequence ID" value="NC_003923.1"/>
</dbReference>
<dbReference type="SMR" id="Q8NV32"/>
<dbReference type="KEGG" id="sam:MW2306"/>
<dbReference type="HOGENOM" id="CLU_083287_3_2_9"/>
<dbReference type="GO" id="GO:0005737">
    <property type="term" value="C:cytoplasm"/>
    <property type="evidence" value="ECO:0007669"/>
    <property type="project" value="UniProtKB-SubCell"/>
</dbReference>
<dbReference type="GO" id="GO:0003677">
    <property type="term" value="F:DNA binding"/>
    <property type="evidence" value="ECO:0007669"/>
    <property type="project" value="UniProtKB-KW"/>
</dbReference>
<dbReference type="GO" id="GO:0003700">
    <property type="term" value="F:DNA-binding transcription factor activity"/>
    <property type="evidence" value="ECO:0007669"/>
    <property type="project" value="InterPro"/>
</dbReference>
<dbReference type="FunFam" id="1.10.10.10:FF:000163">
    <property type="entry name" value="MarR family transcriptional regulator"/>
    <property type="match status" value="1"/>
</dbReference>
<dbReference type="Gene3D" id="1.10.10.10">
    <property type="entry name" value="Winged helix-like DNA-binding domain superfamily/Winged helix DNA-binding domain"/>
    <property type="match status" value="1"/>
</dbReference>
<dbReference type="InterPro" id="IPR000835">
    <property type="entry name" value="HTH_MarR-typ"/>
</dbReference>
<dbReference type="InterPro" id="IPR055166">
    <property type="entry name" value="Transc_reg_Sar_Rot_HTH"/>
</dbReference>
<dbReference type="InterPro" id="IPR036388">
    <property type="entry name" value="WH-like_DNA-bd_sf"/>
</dbReference>
<dbReference type="InterPro" id="IPR036390">
    <property type="entry name" value="WH_DNA-bd_sf"/>
</dbReference>
<dbReference type="PANTHER" id="PTHR42756">
    <property type="entry name" value="TRANSCRIPTIONAL REGULATOR, MARR"/>
    <property type="match status" value="1"/>
</dbReference>
<dbReference type="PANTHER" id="PTHR42756:SF1">
    <property type="entry name" value="TRANSCRIPTIONAL REPRESSOR OF EMRAB OPERON"/>
    <property type="match status" value="1"/>
</dbReference>
<dbReference type="Pfam" id="PF22381">
    <property type="entry name" value="Staph_reg_Sar_Rot"/>
    <property type="match status" value="1"/>
</dbReference>
<dbReference type="PRINTS" id="PR00598">
    <property type="entry name" value="HTHMARR"/>
</dbReference>
<dbReference type="SMART" id="SM00347">
    <property type="entry name" value="HTH_MARR"/>
    <property type="match status" value="1"/>
</dbReference>
<dbReference type="SUPFAM" id="SSF46785">
    <property type="entry name" value="Winged helix' DNA-binding domain"/>
    <property type="match status" value="1"/>
</dbReference>
<dbReference type="PROSITE" id="PS50995">
    <property type="entry name" value="HTH_MARR_2"/>
    <property type="match status" value="1"/>
</dbReference>
<accession>Q8NV32</accession>
<comment type="function">
    <text evidence="1">Activates transcription of virulence factors alpha- and beta hemolysin genes (hla and hlb). Also, activates RNAIII expression, a central regulator transcribed from the agr locus (By similarity).</text>
</comment>
<comment type="subcellular location">
    <subcellularLocation>
        <location evidence="1">Cytoplasm</location>
    </subcellularLocation>
</comment>
<comment type="induction">
    <text evidence="1">Transcriptionally activated by CvfA.</text>
</comment>
<comment type="similarity">
    <text evidence="3">Belongs to the SarZ family.</text>
</comment>
<protein>
    <recommendedName>
        <fullName>HTH-type transcriptional regulator SarZ</fullName>
    </recommendedName>
    <alternativeName>
        <fullName>Staphylococcal accessory regulator Z</fullName>
    </alternativeName>
</protein>
<gene>
    <name type="primary">sarZ</name>
    <name type="ordered locus">MW2306</name>
</gene>
<organism>
    <name type="scientific">Staphylococcus aureus (strain MW2)</name>
    <dbReference type="NCBI Taxonomy" id="196620"/>
    <lineage>
        <taxon>Bacteria</taxon>
        <taxon>Bacillati</taxon>
        <taxon>Bacillota</taxon>
        <taxon>Bacilli</taxon>
        <taxon>Bacillales</taxon>
        <taxon>Staphylococcaceae</taxon>
        <taxon>Staphylococcus</taxon>
    </lineage>
</organism>
<proteinExistence type="inferred from homology"/>
<reference key="1">
    <citation type="journal article" date="2002" name="Lancet">
        <title>Genome and virulence determinants of high virulence community-acquired MRSA.</title>
        <authorList>
            <person name="Baba T."/>
            <person name="Takeuchi F."/>
            <person name="Kuroda M."/>
            <person name="Yuzawa H."/>
            <person name="Aoki K."/>
            <person name="Oguchi A."/>
            <person name="Nagai Y."/>
            <person name="Iwama N."/>
            <person name="Asano K."/>
            <person name="Naimi T."/>
            <person name="Kuroda H."/>
            <person name="Cui L."/>
            <person name="Yamamoto K."/>
            <person name="Hiramatsu K."/>
        </authorList>
    </citation>
    <scope>NUCLEOTIDE SEQUENCE [LARGE SCALE GENOMIC DNA]</scope>
    <source>
        <strain>MW2</strain>
    </source>
</reference>
<keyword id="KW-0010">Activator</keyword>
<keyword id="KW-0963">Cytoplasm</keyword>
<keyword id="KW-0238">DNA-binding</keyword>
<keyword id="KW-0804">Transcription</keyword>
<keyword id="KW-0805">Transcription regulation</keyword>
<keyword id="KW-0843">Virulence</keyword>
<name>SARZ_STAAW</name>
<sequence>MYVENSYLSKQLCFLFYVSSKEIIKKYTNYLKEYDLTYTGYIVLMAIENDEKLNIKKLGERVFLDSGTLTPLLKKLEKKDYVVRTREEKDERNLQISLTEQGKAIKSPLAEISVKVFNEFNISEREASDIINNLRNFVSKNFDYSDKK</sequence>
<feature type="chain" id="PRO_0000284459" description="HTH-type transcriptional regulator SarZ">
    <location>
        <begin position="1"/>
        <end position="148"/>
    </location>
</feature>
<feature type="domain" description="HTH marR-type" evidence="2">
    <location>
        <begin position="9"/>
        <end position="139"/>
    </location>
</feature>
<feature type="DNA-binding region" description="H-T-H motif" evidence="2">
    <location>
        <begin position="55"/>
        <end position="78"/>
    </location>
</feature>
<evidence type="ECO:0000250" key="1"/>
<evidence type="ECO:0000255" key="2">
    <source>
        <dbReference type="PROSITE-ProRule" id="PRU00345"/>
    </source>
</evidence>
<evidence type="ECO:0000305" key="3"/>